<dbReference type="EMBL" id="CP000653">
    <property type="protein sequence ID" value="ABP61910.1"/>
    <property type="molecule type" value="Genomic_DNA"/>
</dbReference>
<dbReference type="RefSeq" id="WP_015960239.1">
    <property type="nucleotide sequence ID" value="NC_009436.1"/>
</dbReference>
<dbReference type="SMR" id="A4WDY0"/>
<dbReference type="STRING" id="399742.Ent638_3246"/>
<dbReference type="KEGG" id="ent:Ent638_3246"/>
<dbReference type="eggNOG" id="ENOG502ZCMR">
    <property type="taxonomic scope" value="Bacteria"/>
</dbReference>
<dbReference type="HOGENOM" id="CLU_121866_0_0_6"/>
<dbReference type="OrthoDB" id="5599437at2"/>
<dbReference type="Proteomes" id="UP000000230">
    <property type="component" value="Chromosome"/>
</dbReference>
<dbReference type="GO" id="GO:0009898">
    <property type="term" value="C:cytoplasmic side of plasma membrane"/>
    <property type="evidence" value="ECO:0007669"/>
    <property type="project" value="InterPro"/>
</dbReference>
<dbReference type="CDD" id="cd16323">
    <property type="entry name" value="Syd"/>
    <property type="match status" value="1"/>
</dbReference>
<dbReference type="Gene3D" id="3.40.1580.20">
    <property type="entry name" value="Syd protein"/>
    <property type="match status" value="1"/>
</dbReference>
<dbReference type="HAMAP" id="MF_01104">
    <property type="entry name" value="Syd"/>
    <property type="match status" value="1"/>
</dbReference>
<dbReference type="InterPro" id="IPR009948">
    <property type="entry name" value="Syd"/>
</dbReference>
<dbReference type="InterPro" id="IPR038228">
    <property type="entry name" value="Syd_sf"/>
</dbReference>
<dbReference type="NCBIfam" id="NF003439">
    <property type="entry name" value="PRK04968.1"/>
    <property type="match status" value="1"/>
</dbReference>
<dbReference type="Pfam" id="PF07348">
    <property type="entry name" value="Syd"/>
    <property type="match status" value="1"/>
</dbReference>
<gene>
    <name evidence="1" type="primary">syd</name>
    <name type="ordered locus">Ent638_3246</name>
</gene>
<proteinExistence type="inferred from homology"/>
<feature type="chain" id="PRO_1000065040" description="Protein Syd">
    <location>
        <begin position="1"/>
        <end position="181"/>
    </location>
</feature>
<name>SYDP_ENT38</name>
<sequence length="181" mass="20417">MDIETANALTAFTARYCDAWHEMNGTWPQSEELYGVPSPCIITTMDDKILWQPQPFSLEQTVNAVERAMDIVVQPAVHAFYTTQFAGDMQARFANETMTLLQTWSENDFQRVQENLIGHLVTQKRLKLAPTLFIATLDSELDVIAVCNLNGEVIKETLGTRKRDVLAPSLADFLNQLEPVL</sequence>
<keyword id="KW-0997">Cell inner membrane</keyword>
<keyword id="KW-1003">Cell membrane</keyword>
<keyword id="KW-0472">Membrane</keyword>
<evidence type="ECO:0000255" key="1">
    <source>
        <dbReference type="HAMAP-Rule" id="MF_01104"/>
    </source>
</evidence>
<accession>A4WDY0</accession>
<reference key="1">
    <citation type="journal article" date="2010" name="PLoS Genet.">
        <title>Genome sequence of the plant growth promoting endophytic bacterium Enterobacter sp. 638.</title>
        <authorList>
            <person name="Taghavi S."/>
            <person name="van der Lelie D."/>
            <person name="Hoffman A."/>
            <person name="Zhang Y.B."/>
            <person name="Walla M.D."/>
            <person name="Vangronsveld J."/>
            <person name="Newman L."/>
            <person name="Monchy S."/>
        </authorList>
    </citation>
    <scope>NUCLEOTIDE SEQUENCE [LARGE SCALE GENOMIC DNA]</scope>
    <source>
        <strain>638</strain>
    </source>
</reference>
<organism>
    <name type="scientific">Enterobacter sp. (strain 638)</name>
    <dbReference type="NCBI Taxonomy" id="399742"/>
    <lineage>
        <taxon>Bacteria</taxon>
        <taxon>Pseudomonadati</taxon>
        <taxon>Pseudomonadota</taxon>
        <taxon>Gammaproteobacteria</taxon>
        <taxon>Enterobacterales</taxon>
        <taxon>Enterobacteriaceae</taxon>
        <taxon>Enterobacter</taxon>
    </lineage>
</organism>
<protein>
    <recommendedName>
        <fullName evidence="1">Protein Syd</fullName>
    </recommendedName>
</protein>
<comment type="function">
    <text evidence="1">Interacts with the SecY protein in vivo. May bind preferentially to an uncomplexed state of SecY, thus functioning either as a chelating agent for excess SecY in the cell or as a regulatory factor that negatively controls the translocase function.</text>
</comment>
<comment type="subcellular location">
    <subcellularLocation>
        <location evidence="1">Cell inner membrane</location>
        <topology evidence="1">Peripheral membrane protein</topology>
        <orientation evidence="1">Cytoplasmic side</orientation>
    </subcellularLocation>
    <text evidence="1">Loosely associated with the cytoplasmic side of the inner membrane, probably via SecY.</text>
</comment>
<comment type="similarity">
    <text evidence="1">Belongs to the Syd family.</text>
</comment>